<dbReference type="EC" id="3.6.4.-" evidence="5"/>
<dbReference type="EMBL" id="AB037866">
    <property type="protein sequence ID" value="BAA90689.1"/>
    <property type="molecule type" value="mRNA"/>
</dbReference>
<dbReference type="SMR" id="P68264"/>
<dbReference type="GO" id="GO:0005737">
    <property type="term" value="C:cytoplasm"/>
    <property type="evidence" value="ECO:0007669"/>
    <property type="project" value="UniProtKB-KW"/>
</dbReference>
<dbReference type="GO" id="GO:0005856">
    <property type="term" value="C:cytoskeleton"/>
    <property type="evidence" value="ECO:0007669"/>
    <property type="project" value="UniProtKB-SubCell"/>
</dbReference>
<dbReference type="GO" id="GO:0005524">
    <property type="term" value="F:ATP binding"/>
    <property type="evidence" value="ECO:0007669"/>
    <property type="project" value="UniProtKB-KW"/>
</dbReference>
<dbReference type="GO" id="GO:0016787">
    <property type="term" value="F:hydrolase activity"/>
    <property type="evidence" value="ECO:0007669"/>
    <property type="project" value="UniProtKB-KW"/>
</dbReference>
<dbReference type="CDD" id="cd10224">
    <property type="entry name" value="ASKHA_NBD_actin"/>
    <property type="match status" value="1"/>
</dbReference>
<dbReference type="FunFam" id="3.30.420.40:FF:000131">
    <property type="entry name" value="Actin, alpha skeletal muscle"/>
    <property type="match status" value="1"/>
</dbReference>
<dbReference type="FunFam" id="3.30.420.40:FF:000291">
    <property type="entry name" value="Actin, alpha skeletal muscle"/>
    <property type="match status" value="1"/>
</dbReference>
<dbReference type="FunFam" id="3.90.640.10:FF:000047">
    <property type="entry name" value="Actin, alpha skeletal muscle"/>
    <property type="match status" value="1"/>
</dbReference>
<dbReference type="FunFam" id="3.30.420.40:FF:000058">
    <property type="entry name" value="Putative actin-related protein 5"/>
    <property type="match status" value="1"/>
</dbReference>
<dbReference type="Gene3D" id="3.30.420.40">
    <property type="match status" value="2"/>
</dbReference>
<dbReference type="Gene3D" id="3.90.640.10">
    <property type="entry name" value="Actin, Chain A, domain 4"/>
    <property type="match status" value="1"/>
</dbReference>
<dbReference type="InterPro" id="IPR004000">
    <property type="entry name" value="Actin"/>
</dbReference>
<dbReference type="InterPro" id="IPR020902">
    <property type="entry name" value="Actin/actin-like_CS"/>
</dbReference>
<dbReference type="InterPro" id="IPR004001">
    <property type="entry name" value="Actin_CS"/>
</dbReference>
<dbReference type="InterPro" id="IPR043129">
    <property type="entry name" value="ATPase_NBD"/>
</dbReference>
<dbReference type="PANTHER" id="PTHR11937">
    <property type="entry name" value="ACTIN"/>
    <property type="match status" value="1"/>
</dbReference>
<dbReference type="Pfam" id="PF00022">
    <property type="entry name" value="Actin"/>
    <property type="match status" value="1"/>
</dbReference>
<dbReference type="PRINTS" id="PR00190">
    <property type="entry name" value="ACTIN"/>
</dbReference>
<dbReference type="SMART" id="SM00268">
    <property type="entry name" value="ACTIN"/>
    <property type="match status" value="1"/>
</dbReference>
<dbReference type="SUPFAM" id="SSF53067">
    <property type="entry name" value="Actin-like ATPase domain"/>
    <property type="match status" value="2"/>
</dbReference>
<dbReference type="PROSITE" id="PS00406">
    <property type="entry name" value="ACTINS_1"/>
    <property type="match status" value="1"/>
</dbReference>
<dbReference type="PROSITE" id="PS00432">
    <property type="entry name" value="ACTINS_2"/>
    <property type="match status" value="1"/>
</dbReference>
<dbReference type="PROSITE" id="PS01132">
    <property type="entry name" value="ACTINS_ACT_LIKE"/>
    <property type="match status" value="1"/>
</dbReference>
<organism>
    <name type="scientific">Oreochromis mossambicus</name>
    <name type="common">Mozambique tilapia</name>
    <name type="synonym">Tilapia mossambica</name>
    <dbReference type="NCBI Taxonomy" id="8127"/>
    <lineage>
        <taxon>Eukaryota</taxon>
        <taxon>Metazoa</taxon>
        <taxon>Chordata</taxon>
        <taxon>Craniata</taxon>
        <taxon>Vertebrata</taxon>
        <taxon>Euteleostomi</taxon>
        <taxon>Actinopterygii</taxon>
        <taxon>Neopterygii</taxon>
        <taxon>Teleostei</taxon>
        <taxon>Neoteleostei</taxon>
        <taxon>Acanthomorphata</taxon>
        <taxon>Ovalentaria</taxon>
        <taxon>Cichlomorphae</taxon>
        <taxon>Cichliformes</taxon>
        <taxon>Cichlidae</taxon>
        <taxon>African cichlids</taxon>
        <taxon>Pseudocrenilabrinae</taxon>
        <taxon>Oreochromini</taxon>
        <taxon>Oreochromis</taxon>
    </lineage>
</organism>
<proteinExistence type="evidence at transcript level"/>
<evidence type="ECO:0000250" key="1">
    <source>
        <dbReference type="UniProtKB" id="P62737"/>
    </source>
</evidence>
<evidence type="ECO:0000250" key="2">
    <source>
        <dbReference type="UniProtKB" id="P68133"/>
    </source>
</evidence>
<evidence type="ECO:0000250" key="3">
    <source>
        <dbReference type="UniProtKB" id="P68134"/>
    </source>
</evidence>
<evidence type="ECO:0000250" key="4">
    <source>
        <dbReference type="UniProtKB" id="P68135"/>
    </source>
</evidence>
<evidence type="ECO:0000250" key="5">
    <source>
        <dbReference type="UniProtKB" id="P68137"/>
    </source>
</evidence>
<evidence type="ECO:0000305" key="6"/>
<comment type="function">
    <text>Actins are highly conserved proteins that are involved in various types of cell motility and are ubiquitously expressed in all eukaryotic cells.</text>
</comment>
<comment type="catalytic activity">
    <reaction evidence="5">
        <text>ATP + H2O = ADP + phosphate + H(+)</text>
        <dbReference type="Rhea" id="RHEA:13065"/>
        <dbReference type="ChEBI" id="CHEBI:15377"/>
        <dbReference type="ChEBI" id="CHEBI:15378"/>
        <dbReference type="ChEBI" id="CHEBI:30616"/>
        <dbReference type="ChEBI" id="CHEBI:43474"/>
        <dbReference type="ChEBI" id="CHEBI:456216"/>
    </reaction>
</comment>
<comment type="subunit">
    <text>Polymerization of globular actin (G-actin) leads to a structural filament (F-actin) in the form of a two-stranded helix. Each actin can bind to 4 others.</text>
</comment>
<comment type="subcellular location">
    <subcellularLocation>
        <location>Cytoplasm</location>
        <location>Cytoskeleton</location>
    </subcellularLocation>
</comment>
<comment type="PTM">
    <molecule>Actin, alpha skeletal muscle, intermediate form</molecule>
    <text evidence="3">N-terminal cleavage of acetylated cysteine of intermediate muscle actin by ACTMAP.</text>
</comment>
<comment type="PTM">
    <text evidence="3">Oxidation of Met-46 and Met-49 by MICALs (MICAL1, MICAL2 or MICAL3) to form methionine sulfoxide promotes actin filament depolymerization. MICAL1 and MICAL2 produce the (R)-S-oxide form. The (R)-S-oxide form is reverted by MSRB1 and MSRB2, which promotes actin repolymerization.</text>
</comment>
<comment type="PTM">
    <text evidence="2">Monomethylation at Lys-86 (K84me1) regulates actin-myosin interaction and actomyosin-dependent processes. Demethylation by ALKBH4 is required for maintaining actomyosin dynamics supporting normal cleavage furrow ingression during cytokinesis and cell migration.</text>
</comment>
<comment type="PTM">
    <text evidence="2">Methylated at His-75 by SETD3.</text>
</comment>
<comment type="miscellaneous">
    <text>In vertebrates 3 main groups of actin isoforms, alpha, beta and gamma have been identified. The alpha actins are found in muscle tissues and are a major constituent of the contractile apparatus. The beta and gamma actins coexist in most cell types as components of the cytoskeleton and as mediators of internal cell motility.</text>
</comment>
<comment type="similarity">
    <text evidence="6">Belongs to the actin family.</text>
</comment>
<name>ACTS_OREMO</name>
<reference key="1">
    <citation type="submission" date="2000-01" db="EMBL/GenBank/DDBJ databases">
        <title>Cloning of Tilapia actin cDNAs.</title>
        <authorList>
            <person name="Takeuchi K."/>
        </authorList>
    </citation>
    <scope>NUCLEOTIDE SEQUENCE [MRNA]</scope>
    <source>
        <tissue>Skeletal muscle</tissue>
    </source>
</reference>
<gene>
    <name type="primary">acta1</name>
</gene>
<protein>
    <recommendedName>
        <fullName>Actin, alpha skeletal muscle</fullName>
        <ecNumber evidence="5">3.6.4.-</ecNumber>
    </recommendedName>
    <alternativeName>
        <fullName>Alpha-actin-1</fullName>
    </alternativeName>
    <component>
        <recommendedName>
            <fullName>Actin, alpha skeletal muscle, intermediate form</fullName>
        </recommendedName>
    </component>
</protein>
<feature type="initiator methionine" description="Removed">
    <location>
        <position position="1"/>
    </location>
</feature>
<feature type="chain" id="PRO_0000442829" description="Actin, alpha skeletal muscle, intermediate form" evidence="1">
    <location>
        <begin position="2"/>
        <end position="377"/>
    </location>
</feature>
<feature type="chain" id="PRO_0000442830" description="Actin, alpha skeletal muscle" evidence="1">
    <location>
        <begin position="3"/>
        <end position="377"/>
    </location>
</feature>
<feature type="modified residue" description="N-acetylcysteine; in intermediate form" evidence="1">
    <location>
        <position position="2"/>
    </location>
</feature>
<feature type="modified residue" description="N-acetylaspartate; in Actin, alpha skeletal muscle" evidence="4">
    <location>
        <position position="3"/>
    </location>
</feature>
<feature type="modified residue" description="Methionine (R)-sulfoxide" evidence="3">
    <location>
        <position position="46"/>
    </location>
</feature>
<feature type="modified residue" description="Methionine (R)-sulfoxide" evidence="3">
    <location>
        <position position="49"/>
    </location>
</feature>
<feature type="modified residue" description="Tele-methylhistidine" evidence="4">
    <location>
        <position position="75"/>
    </location>
</feature>
<feature type="modified residue" description="N6-methyllysine" evidence="2">
    <location>
        <position position="86"/>
    </location>
</feature>
<sequence>MCDDDETTALVCDNGSGLVKAGFAGDDAPRAVFPSIVGRPRHQGVMVGMGQKDSYVGDEAQSKRGILTLKYPIEHGIITNWDDMEKIWHHTFYNELRVAPEEHPTLLTEAPLNPKANREKMTQIMFETFNVPAMYVAIQAVLSLYASGRTTGIVLDAGDGVTHNVPVYEGYALPHAIMRLDLAGRDLTDYLMKILTERGYSFVTTAEREIVRDIKEKLCYVALDFENEMATAASSSSLEKSYELPDGQVITIGNERFRCPETLFQPSFIGMESAGIHETAYNSIMKCDIDIRKDLYANNVLSGGTTMYPGIADRMQKEITALAPSTMKIKIIAPPERKYSVWIGGSILASLSTFQQMWISKQEYDEAGPSIVHRKCF</sequence>
<keyword id="KW-0007">Acetylation</keyword>
<keyword id="KW-0067">ATP-binding</keyword>
<keyword id="KW-0963">Cytoplasm</keyword>
<keyword id="KW-0206">Cytoskeleton</keyword>
<keyword id="KW-0378">Hydrolase</keyword>
<keyword id="KW-0488">Methylation</keyword>
<keyword id="KW-0514">Muscle protein</keyword>
<keyword id="KW-0547">Nucleotide-binding</keyword>
<keyword id="KW-0558">Oxidation</keyword>
<accession>P68264</accession>
<accession>P53481</accession>